<comment type="function">
    <text evidence="2">ATP-dependent DNA helicase involved in DNA damage repair by homologous recombination and in genome maintenance. Capable of unwinding D-loops. Plays a role in limiting crossover recombinants during mitotic DNA double-strand break (DSB) repair. Component of a FANCM-MHF complex which promotes gene conversion at blocked replication forks, probably by reversal of the stalled fork.</text>
</comment>
<comment type="catalytic activity">
    <reaction evidence="2">
        <text>ATP + H2O = ADP + phosphate + H(+)</text>
        <dbReference type="Rhea" id="RHEA:13065"/>
        <dbReference type="ChEBI" id="CHEBI:15377"/>
        <dbReference type="ChEBI" id="CHEBI:15378"/>
        <dbReference type="ChEBI" id="CHEBI:30616"/>
        <dbReference type="ChEBI" id="CHEBI:43474"/>
        <dbReference type="ChEBI" id="CHEBI:456216"/>
        <dbReference type="EC" id="3.6.4.12"/>
    </reaction>
</comment>
<comment type="subunit">
    <text evidence="2">Interacts with the MHF histone-fold complex to form the FANCM-MHF complex.</text>
</comment>
<comment type="subcellular location">
    <subcellularLocation>
        <location evidence="1">Nucleus</location>
    </subcellularLocation>
</comment>
<comment type="similarity">
    <text evidence="6">Belongs to the DEAD box helicase family. DEAH subfamily. FANCM sub-subfamily.</text>
</comment>
<gene>
    <name evidence="1" type="primary">MPH1</name>
    <name type="ORF">CIMG_04770</name>
</gene>
<reference key="1">
    <citation type="journal article" date="2009" name="Genome Res.">
        <title>Comparative genomic analyses of the human fungal pathogens Coccidioides and their relatives.</title>
        <authorList>
            <person name="Sharpton T.J."/>
            <person name="Stajich J.E."/>
            <person name="Rounsley S.D."/>
            <person name="Gardner M.J."/>
            <person name="Wortman J.R."/>
            <person name="Jordar V.S."/>
            <person name="Maiti R."/>
            <person name="Kodira C.D."/>
            <person name="Neafsey D.E."/>
            <person name="Zeng Q."/>
            <person name="Hung C.-Y."/>
            <person name="McMahan C."/>
            <person name="Muszewska A."/>
            <person name="Grynberg M."/>
            <person name="Mandel M.A."/>
            <person name="Kellner E.M."/>
            <person name="Barker B.M."/>
            <person name="Galgiani J.N."/>
            <person name="Orbach M.J."/>
            <person name="Kirkland T.N."/>
            <person name="Cole G.T."/>
            <person name="Henn M.R."/>
            <person name="Birren B.W."/>
            <person name="Taylor J.W."/>
        </authorList>
    </citation>
    <scope>NUCLEOTIDE SEQUENCE [LARGE SCALE GENOMIC DNA]</scope>
    <source>
        <strain>RS</strain>
    </source>
</reference>
<reference key="2">
    <citation type="journal article" date="2010" name="Genome Res.">
        <title>Population genomic sequencing of Coccidioides fungi reveals recent hybridization and transposon control.</title>
        <authorList>
            <person name="Neafsey D.E."/>
            <person name="Barker B.M."/>
            <person name="Sharpton T.J."/>
            <person name="Stajich J.E."/>
            <person name="Park D.J."/>
            <person name="Whiston E."/>
            <person name="Hung C.-Y."/>
            <person name="McMahan C."/>
            <person name="White J."/>
            <person name="Sykes S."/>
            <person name="Heiman D."/>
            <person name="Young S."/>
            <person name="Zeng Q."/>
            <person name="Abouelleil A."/>
            <person name="Aftuck L."/>
            <person name="Bessette D."/>
            <person name="Brown A."/>
            <person name="FitzGerald M."/>
            <person name="Lui A."/>
            <person name="Macdonald J.P."/>
            <person name="Priest M."/>
            <person name="Orbach M.J."/>
            <person name="Galgiani J.N."/>
            <person name="Kirkland T.N."/>
            <person name="Cole G.T."/>
            <person name="Birren B.W."/>
            <person name="Henn M.R."/>
            <person name="Taylor J.W."/>
            <person name="Rounsley S.D."/>
        </authorList>
    </citation>
    <scope>GENOME REANNOTATION</scope>
    <source>
        <strain>RS</strain>
    </source>
</reference>
<sequence>MADDGCSGLSDFITDDELFNEVTLNEVSDSQTGRPTKRRRLNSHEINTDSTGRREIEEAGTDSDTFDPSLPPNSKTTGRGRKSNDDNPAARKPKTYTPKYHVDQKPLFVTQTQPSSSPSRIRGPRWKAPERNKPSTVSKAKQKSPLPAIWGRKPSTIGSHGTNGKDIDAAIAASLRSFEEEQSARGDAEMLDDSIEEPGDTQVHATPGPVTNAEKETIFDFEDIPDDAFDFEPEFTETADKEPILISSQPRPSQNTTRRPTASQSTSFRQTTLLGGFASSSSKRSSQPATQTWPSSSRNEPPTHHELNKDALRTWIFPKNLGSRREYQFNIAHRALFHNLLVALPTGLGKTFIAATVMLNWFHWTKDAQIVFVAPTKPLVSQQVDACFHIAGIPRSQTTLLTGNTPPGVRAEEWRSKRVFFMTPQTIMNDLKTGIADPKRIVLLVVDEAHRATGAYAYVEIVKFLQRFNNSFRVLALTATPGATVEAVQEVIDGLSISRIEIRTEKSLDIRGFVHQRNVETITFENSRDMITSMELFAKALQPVVDRLRNQNAYWGRDPMALTPFGLTKARQEWNSSPAGRAASWPVKGTINSMFTVLASLAHAIDLLKYHGIGPFYRNLVSFEDSVLKEKKGGKCASQIVADGNFKVLMSKLRSWTNTEEFIGHPKLEYLRRAILNHFLDAGGKNGGDSEGSDSNTRVMIFSHFRDSAEEIVRVLRKHQPFVRPHVFVGQANAKGSEGMDQKTQLEVVGKFKTGTYNTIVATSIGEEGLDIGEVDLIICYDGHSSPIRMLQRMGRTGRKRAGNIILLLSKGKEEESYSKAKDSYEKMQQLIASGSRFTFHTDKSSRIVPQDIQPEAEEKMIEIPIENSQLGLPEPAKRSRAPKRPPKKFHMPDGVEKGFTKASRLGRTNTDSNGRSKRKRVVRTPSPELEEFPDLGDLCANQSQELADDPDFQEIAGKQIPRLRMDVYPEHQRSLRPTGFIEHGKYTRRVVKTFRKISKLGFDCEAQYRAIVGDPDDDGEGLEGLSTDREDDPQSVTAHQSREQPPRVEKRCGTEELSSLDIEAFFPNLAWPARPEAPRPESDGTDNRDQKPSQRKKRYMISDDSDVFE</sequence>
<name>MPH1_COCIM</name>
<proteinExistence type="inferred from homology"/>
<evidence type="ECO:0000250" key="1">
    <source>
        <dbReference type="UniProtKB" id="P40562"/>
    </source>
</evidence>
<evidence type="ECO:0000250" key="2">
    <source>
        <dbReference type="UniProtKB" id="Q9UT23"/>
    </source>
</evidence>
<evidence type="ECO:0000255" key="3">
    <source>
        <dbReference type="PROSITE-ProRule" id="PRU00541"/>
    </source>
</evidence>
<evidence type="ECO:0000255" key="4">
    <source>
        <dbReference type="PROSITE-ProRule" id="PRU00542"/>
    </source>
</evidence>
<evidence type="ECO:0000256" key="5">
    <source>
        <dbReference type="SAM" id="MobiDB-lite"/>
    </source>
</evidence>
<evidence type="ECO:0000305" key="6"/>
<accession>Q1DY43</accession>
<accession>J3KEQ3</accession>
<organism>
    <name type="scientific">Coccidioides immitis (strain RS)</name>
    <name type="common">Valley fever fungus</name>
    <dbReference type="NCBI Taxonomy" id="246410"/>
    <lineage>
        <taxon>Eukaryota</taxon>
        <taxon>Fungi</taxon>
        <taxon>Dikarya</taxon>
        <taxon>Ascomycota</taxon>
        <taxon>Pezizomycotina</taxon>
        <taxon>Eurotiomycetes</taxon>
        <taxon>Eurotiomycetidae</taxon>
        <taxon>Onygenales</taxon>
        <taxon>Onygenaceae</taxon>
        <taxon>Coccidioides</taxon>
    </lineage>
</organism>
<dbReference type="EC" id="3.6.4.12" evidence="1 2"/>
<dbReference type="EMBL" id="GG704914">
    <property type="protein sequence ID" value="EAS33746.3"/>
    <property type="molecule type" value="Genomic_DNA"/>
</dbReference>
<dbReference type="RefSeq" id="XP_001245329.1">
    <property type="nucleotide sequence ID" value="XM_001245328.1"/>
</dbReference>
<dbReference type="SMR" id="Q1DY43"/>
<dbReference type="FunCoup" id="Q1DY43">
    <property type="interactions" value="187"/>
</dbReference>
<dbReference type="STRING" id="246410.Q1DY43"/>
<dbReference type="GeneID" id="4564165"/>
<dbReference type="KEGG" id="cim:CIMG_04770"/>
<dbReference type="VEuPathDB" id="FungiDB:CIMG_04770"/>
<dbReference type="InParanoid" id="Q1DY43"/>
<dbReference type="OMA" id="FMMRAIF"/>
<dbReference type="OrthoDB" id="164902at2759"/>
<dbReference type="Proteomes" id="UP000001261">
    <property type="component" value="Unassembled WGS sequence"/>
</dbReference>
<dbReference type="GO" id="GO:0005634">
    <property type="term" value="C:nucleus"/>
    <property type="evidence" value="ECO:0007669"/>
    <property type="project" value="UniProtKB-SubCell"/>
</dbReference>
<dbReference type="GO" id="GO:0043138">
    <property type="term" value="F:3'-5' DNA helicase activity"/>
    <property type="evidence" value="ECO:0007669"/>
    <property type="project" value="InterPro"/>
</dbReference>
<dbReference type="GO" id="GO:0005524">
    <property type="term" value="F:ATP binding"/>
    <property type="evidence" value="ECO:0007669"/>
    <property type="project" value="UniProtKB-KW"/>
</dbReference>
<dbReference type="GO" id="GO:0016887">
    <property type="term" value="F:ATP hydrolysis activity"/>
    <property type="evidence" value="ECO:0007669"/>
    <property type="project" value="RHEA"/>
</dbReference>
<dbReference type="GO" id="GO:0000400">
    <property type="term" value="F:four-way junction DNA binding"/>
    <property type="evidence" value="ECO:0007669"/>
    <property type="project" value="TreeGrafter"/>
</dbReference>
<dbReference type="GO" id="GO:0009378">
    <property type="term" value="F:four-way junction helicase activity"/>
    <property type="evidence" value="ECO:0007669"/>
    <property type="project" value="TreeGrafter"/>
</dbReference>
<dbReference type="GO" id="GO:0045003">
    <property type="term" value="P:double-strand break repair via synthesis-dependent strand annealing"/>
    <property type="evidence" value="ECO:0007669"/>
    <property type="project" value="TreeGrafter"/>
</dbReference>
<dbReference type="GO" id="GO:0036297">
    <property type="term" value="P:interstrand cross-link repair"/>
    <property type="evidence" value="ECO:0007669"/>
    <property type="project" value="TreeGrafter"/>
</dbReference>
<dbReference type="CDD" id="cd18033">
    <property type="entry name" value="DEXDc_FANCM"/>
    <property type="match status" value="1"/>
</dbReference>
<dbReference type="CDD" id="cd12091">
    <property type="entry name" value="FANCM_ID"/>
    <property type="match status" value="1"/>
</dbReference>
<dbReference type="CDD" id="cd18801">
    <property type="entry name" value="SF2_C_FANCM_Hef"/>
    <property type="match status" value="1"/>
</dbReference>
<dbReference type="FunFam" id="3.40.50.300:FF:000861">
    <property type="entry name" value="Fanconi anemia, complementation group M"/>
    <property type="match status" value="1"/>
</dbReference>
<dbReference type="Gene3D" id="1.20.1320.20">
    <property type="entry name" value="hef helicase domain"/>
    <property type="match status" value="1"/>
</dbReference>
<dbReference type="Gene3D" id="3.40.50.300">
    <property type="entry name" value="P-loop containing nucleotide triphosphate hydrolases"/>
    <property type="match status" value="2"/>
</dbReference>
<dbReference type="InterPro" id="IPR039686">
    <property type="entry name" value="FANCM/Mph1-like_ID"/>
</dbReference>
<dbReference type="InterPro" id="IPR044749">
    <property type="entry name" value="FANCM_DEXDc"/>
</dbReference>
<dbReference type="InterPro" id="IPR006935">
    <property type="entry name" value="Helicase/UvrB_N"/>
</dbReference>
<dbReference type="InterPro" id="IPR014001">
    <property type="entry name" value="Helicase_ATP-bd"/>
</dbReference>
<dbReference type="InterPro" id="IPR001650">
    <property type="entry name" value="Helicase_C-like"/>
</dbReference>
<dbReference type="InterPro" id="IPR027417">
    <property type="entry name" value="P-loop_NTPase"/>
</dbReference>
<dbReference type="PANTHER" id="PTHR14025">
    <property type="entry name" value="FANCONI ANEMIA GROUP M FANCM FAMILY MEMBER"/>
    <property type="match status" value="1"/>
</dbReference>
<dbReference type="PANTHER" id="PTHR14025:SF20">
    <property type="entry name" value="FANCONI ANEMIA GROUP M PROTEIN"/>
    <property type="match status" value="1"/>
</dbReference>
<dbReference type="Pfam" id="PF00271">
    <property type="entry name" value="Helicase_C"/>
    <property type="match status" value="1"/>
</dbReference>
<dbReference type="Pfam" id="PF04851">
    <property type="entry name" value="ResIII"/>
    <property type="match status" value="1"/>
</dbReference>
<dbReference type="SMART" id="SM00487">
    <property type="entry name" value="DEXDc"/>
    <property type="match status" value="1"/>
</dbReference>
<dbReference type="SMART" id="SM00490">
    <property type="entry name" value="HELICc"/>
    <property type="match status" value="1"/>
</dbReference>
<dbReference type="SUPFAM" id="SSF52540">
    <property type="entry name" value="P-loop containing nucleoside triphosphate hydrolases"/>
    <property type="match status" value="1"/>
</dbReference>
<dbReference type="PROSITE" id="PS51192">
    <property type="entry name" value="HELICASE_ATP_BIND_1"/>
    <property type="match status" value="1"/>
</dbReference>
<dbReference type="PROSITE" id="PS51194">
    <property type="entry name" value="HELICASE_CTER"/>
    <property type="match status" value="1"/>
</dbReference>
<feature type="chain" id="PRO_0000333373" description="ATP-dependent DNA helicase MPH1">
    <location>
        <begin position="1"/>
        <end position="1110"/>
    </location>
</feature>
<feature type="domain" description="Helicase ATP-binding" evidence="3">
    <location>
        <begin position="331"/>
        <end position="499"/>
    </location>
</feature>
<feature type="domain" description="Helicase C-terminal" evidence="4">
    <location>
        <begin position="675"/>
        <end position="846"/>
    </location>
</feature>
<feature type="region of interest" description="Disordered" evidence="5">
    <location>
        <begin position="24"/>
        <end position="165"/>
    </location>
</feature>
<feature type="region of interest" description="Disordered" evidence="5">
    <location>
        <begin position="178"/>
        <end position="212"/>
    </location>
</feature>
<feature type="region of interest" description="Disordered" evidence="5">
    <location>
        <begin position="236"/>
        <end position="305"/>
    </location>
</feature>
<feature type="region of interest" description="Disordered" evidence="5">
    <location>
        <begin position="867"/>
        <end position="937"/>
    </location>
</feature>
<feature type="region of interest" description="Disordered" evidence="5">
    <location>
        <begin position="1013"/>
        <end position="1055"/>
    </location>
</feature>
<feature type="region of interest" description="Disordered" evidence="5">
    <location>
        <begin position="1069"/>
        <end position="1110"/>
    </location>
</feature>
<feature type="short sequence motif" description="DEAH box" evidence="3">
    <location>
        <begin position="447"/>
        <end position="450"/>
    </location>
</feature>
<feature type="compositionally biased region" description="Polar residues" evidence="5">
    <location>
        <begin position="24"/>
        <end position="34"/>
    </location>
</feature>
<feature type="compositionally biased region" description="Basic and acidic residues" evidence="5">
    <location>
        <begin position="42"/>
        <end position="57"/>
    </location>
</feature>
<feature type="compositionally biased region" description="Basic and acidic residues" evidence="5">
    <location>
        <begin position="178"/>
        <end position="188"/>
    </location>
</feature>
<feature type="compositionally biased region" description="Acidic residues" evidence="5">
    <location>
        <begin position="189"/>
        <end position="199"/>
    </location>
</feature>
<feature type="compositionally biased region" description="Polar residues" evidence="5">
    <location>
        <begin position="246"/>
        <end position="273"/>
    </location>
</feature>
<feature type="compositionally biased region" description="Polar residues" evidence="5">
    <location>
        <begin position="287"/>
        <end position="300"/>
    </location>
</feature>
<feature type="compositionally biased region" description="Basic residues" evidence="5">
    <location>
        <begin position="879"/>
        <end position="890"/>
    </location>
</feature>
<feature type="compositionally biased region" description="Basic and acidic residues" evidence="5">
    <location>
        <begin position="891"/>
        <end position="900"/>
    </location>
</feature>
<feature type="compositionally biased region" description="Basic and acidic residues" evidence="5">
    <location>
        <begin position="1041"/>
        <end position="1055"/>
    </location>
</feature>
<feature type="compositionally biased region" description="Basic and acidic residues" evidence="5">
    <location>
        <begin position="1077"/>
        <end position="1093"/>
    </location>
</feature>
<feature type="binding site" evidence="3">
    <location>
        <begin position="344"/>
        <end position="351"/>
    </location>
    <ligand>
        <name>ATP</name>
        <dbReference type="ChEBI" id="CHEBI:30616"/>
    </ligand>
</feature>
<protein>
    <recommendedName>
        <fullName evidence="1">ATP-dependent DNA helicase MPH1</fullName>
        <ecNumber evidence="1 2">3.6.4.12</ecNumber>
    </recommendedName>
    <alternativeName>
        <fullName evidence="2">FANCM-like protein 1</fullName>
    </alternativeName>
</protein>
<keyword id="KW-0067">ATP-binding</keyword>
<keyword id="KW-0227">DNA damage</keyword>
<keyword id="KW-0234">DNA repair</keyword>
<keyword id="KW-0238">DNA-binding</keyword>
<keyword id="KW-0347">Helicase</keyword>
<keyword id="KW-0378">Hydrolase</keyword>
<keyword id="KW-0547">Nucleotide-binding</keyword>
<keyword id="KW-0539">Nucleus</keyword>
<keyword id="KW-1185">Reference proteome</keyword>